<organism>
    <name type="scientific">Nocardia farcinica (strain IFM 10152)</name>
    <dbReference type="NCBI Taxonomy" id="247156"/>
    <lineage>
        <taxon>Bacteria</taxon>
        <taxon>Bacillati</taxon>
        <taxon>Actinomycetota</taxon>
        <taxon>Actinomycetes</taxon>
        <taxon>Mycobacteriales</taxon>
        <taxon>Nocardiaceae</taxon>
        <taxon>Nocardia</taxon>
    </lineage>
</organism>
<comment type="catalytic activity">
    <reaction evidence="1">
        <text>D-erythro-1-(imidazol-4-yl)glycerol 3-phosphate = 3-(imidazol-4-yl)-2-oxopropyl phosphate + H2O</text>
        <dbReference type="Rhea" id="RHEA:11040"/>
        <dbReference type="ChEBI" id="CHEBI:15377"/>
        <dbReference type="ChEBI" id="CHEBI:57766"/>
        <dbReference type="ChEBI" id="CHEBI:58278"/>
        <dbReference type="EC" id="4.2.1.19"/>
    </reaction>
</comment>
<comment type="pathway">
    <text evidence="1">Amino-acid biosynthesis; L-histidine biosynthesis; L-histidine from 5-phospho-alpha-D-ribose 1-diphosphate: step 6/9.</text>
</comment>
<comment type="subcellular location">
    <subcellularLocation>
        <location evidence="1">Cytoplasm</location>
    </subcellularLocation>
</comment>
<comment type="similarity">
    <text evidence="1">Belongs to the imidazoleglycerol-phosphate dehydratase family.</text>
</comment>
<proteinExistence type="inferred from homology"/>
<feature type="chain" id="PRO_0000158150" description="Imidazoleglycerol-phosphate dehydratase">
    <location>
        <begin position="1"/>
        <end position="216"/>
    </location>
</feature>
<dbReference type="EC" id="4.2.1.19" evidence="1"/>
<dbReference type="EMBL" id="AP006618">
    <property type="protein sequence ID" value="BAD56693.1"/>
    <property type="molecule type" value="Genomic_DNA"/>
</dbReference>
<dbReference type="SMR" id="Q5YYP8"/>
<dbReference type="STRING" id="247156.NFA_18470"/>
<dbReference type="KEGG" id="nfa:NFA_18470"/>
<dbReference type="eggNOG" id="COG0131">
    <property type="taxonomic scope" value="Bacteria"/>
</dbReference>
<dbReference type="HOGENOM" id="CLU_044308_3_0_11"/>
<dbReference type="OrthoDB" id="9790411at2"/>
<dbReference type="UniPathway" id="UPA00031">
    <property type="reaction ID" value="UER00011"/>
</dbReference>
<dbReference type="Proteomes" id="UP000006820">
    <property type="component" value="Chromosome"/>
</dbReference>
<dbReference type="GO" id="GO:0005737">
    <property type="term" value="C:cytoplasm"/>
    <property type="evidence" value="ECO:0007669"/>
    <property type="project" value="UniProtKB-SubCell"/>
</dbReference>
<dbReference type="GO" id="GO:0004424">
    <property type="term" value="F:imidazoleglycerol-phosphate dehydratase activity"/>
    <property type="evidence" value="ECO:0007669"/>
    <property type="project" value="UniProtKB-UniRule"/>
</dbReference>
<dbReference type="GO" id="GO:0000105">
    <property type="term" value="P:L-histidine biosynthetic process"/>
    <property type="evidence" value="ECO:0007669"/>
    <property type="project" value="UniProtKB-UniRule"/>
</dbReference>
<dbReference type="CDD" id="cd07914">
    <property type="entry name" value="IGPD"/>
    <property type="match status" value="1"/>
</dbReference>
<dbReference type="FunFam" id="3.30.230.40:FF:000001">
    <property type="entry name" value="Imidazoleglycerol-phosphate dehydratase HisB"/>
    <property type="match status" value="1"/>
</dbReference>
<dbReference type="FunFam" id="3.30.230.40:FF:000003">
    <property type="entry name" value="Imidazoleglycerol-phosphate dehydratase HisB"/>
    <property type="match status" value="1"/>
</dbReference>
<dbReference type="Gene3D" id="3.30.230.40">
    <property type="entry name" value="Imidazole glycerol phosphate dehydratase, domain 1"/>
    <property type="match status" value="2"/>
</dbReference>
<dbReference type="HAMAP" id="MF_00076">
    <property type="entry name" value="HisB"/>
    <property type="match status" value="1"/>
</dbReference>
<dbReference type="InterPro" id="IPR038494">
    <property type="entry name" value="IGPD_sf"/>
</dbReference>
<dbReference type="InterPro" id="IPR000807">
    <property type="entry name" value="ImidazoleglycerolP_deHydtase"/>
</dbReference>
<dbReference type="InterPro" id="IPR020565">
    <property type="entry name" value="ImidazoleglycerP_deHydtase_CS"/>
</dbReference>
<dbReference type="InterPro" id="IPR020568">
    <property type="entry name" value="Ribosomal_Su5_D2-typ_SF"/>
</dbReference>
<dbReference type="NCBIfam" id="NF002110">
    <property type="entry name" value="PRK00951.1-6"/>
    <property type="match status" value="1"/>
</dbReference>
<dbReference type="NCBIfam" id="NF002111">
    <property type="entry name" value="PRK00951.2-1"/>
    <property type="match status" value="1"/>
</dbReference>
<dbReference type="PANTHER" id="PTHR23133:SF2">
    <property type="entry name" value="IMIDAZOLEGLYCEROL-PHOSPHATE DEHYDRATASE"/>
    <property type="match status" value="1"/>
</dbReference>
<dbReference type="PANTHER" id="PTHR23133">
    <property type="entry name" value="IMIDAZOLEGLYCEROL-PHOSPHATE DEHYDRATASE HIS7"/>
    <property type="match status" value="1"/>
</dbReference>
<dbReference type="Pfam" id="PF00475">
    <property type="entry name" value="IGPD"/>
    <property type="match status" value="1"/>
</dbReference>
<dbReference type="SUPFAM" id="SSF54211">
    <property type="entry name" value="Ribosomal protein S5 domain 2-like"/>
    <property type="match status" value="2"/>
</dbReference>
<dbReference type="PROSITE" id="PS00954">
    <property type="entry name" value="IGP_DEHYDRATASE_1"/>
    <property type="match status" value="1"/>
</dbReference>
<dbReference type="PROSITE" id="PS00955">
    <property type="entry name" value="IGP_DEHYDRATASE_2"/>
    <property type="match status" value="1"/>
</dbReference>
<gene>
    <name evidence="1" type="primary">hisB</name>
    <name type="ordered locus">NFA_18470</name>
</gene>
<accession>Q5YYP8</accession>
<keyword id="KW-0028">Amino-acid biosynthesis</keyword>
<keyword id="KW-0963">Cytoplasm</keyword>
<keyword id="KW-0368">Histidine biosynthesis</keyword>
<keyword id="KW-0456">Lyase</keyword>
<keyword id="KW-1185">Reference proteome</keyword>
<name>HIS7_NOCFA</name>
<protein>
    <recommendedName>
        <fullName evidence="1">Imidazoleglycerol-phosphate dehydratase</fullName>
        <shortName evidence="1">IGPD</shortName>
        <ecNumber evidence="1">4.2.1.19</ecNumber>
    </recommendedName>
</protein>
<evidence type="ECO:0000255" key="1">
    <source>
        <dbReference type="HAMAP-Rule" id="MF_00076"/>
    </source>
</evidence>
<reference key="1">
    <citation type="journal article" date="2004" name="Proc. Natl. Acad. Sci. U.S.A.">
        <title>The complete genomic sequence of Nocardia farcinica IFM 10152.</title>
        <authorList>
            <person name="Ishikawa J."/>
            <person name="Yamashita A."/>
            <person name="Mikami Y."/>
            <person name="Hoshino Y."/>
            <person name="Kurita H."/>
            <person name="Hotta K."/>
            <person name="Shiba T."/>
            <person name="Hattori M."/>
        </authorList>
    </citation>
    <scope>NUCLEOTIDE SEQUENCE [LARGE SCALE GENOMIC DNA]</scope>
    <source>
        <strain>IFM 10152</strain>
    </source>
</reference>
<sequence length="216" mass="23301">MTDTTLRHRTARVERVTKESSIVVELDLDGTGRTDISTGVPFYDHMLTALGAHASFDLSVRAEGDIQIEAHHTVEDTAIVFGQALGKALGDKAGIRRFGDAFIPMDETLAHAAVDVSGRPYCVHTGEPEHLLHAVIPGSPVRGTGEPGAPYSTVLNRHVFESIALNARIALHVRVLYGRDQHHVTEAEFKAVARALRAAVEFDPRVSGVPSTKGTL</sequence>